<name>DSBI_LELAM</name>
<protein>
    <recommendedName>
        <fullName evidence="1">Protein-disulfide oxidoreductase DsbI</fullName>
    </recommendedName>
</protein>
<accession>Q9XDP0</accession>
<feature type="chain" id="PRO_0000059389" description="Protein-disulfide oxidoreductase DsbI">
    <location>
        <begin position="1"/>
        <end position="221"/>
    </location>
</feature>
<feature type="transmembrane region" description="Helical" evidence="1">
    <location>
        <begin position="27"/>
        <end position="47"/>
    </location>
</feature>
<feature type="transmembrane region" description="Helical" evidence="1">
    <location>
        <begin position="64"/>
        <end position="84"/>
    </location>
</feature>
<feature type="transmembrane region" description="Helical" evidence="1">
    <location>
        <begin position="85"/>
        <end position="105"/>
    </location>
</feature>
<feature type="transmembrane region" description="Helical" evidence="1">
    <location>
        <begin position="189"/>
        <end position="209"/>
    </location>
</feature>
<feature type="disulfide bond" description="Redox-active" evidence="1">
    <location>
        <begin position="56"/>
        <end position="59"/>
    </location>
</feature>
<feature type="disulfide bond" description="Redox-active" evidence="1">
    <location>
        <begin position="128"/>
        <end position="154"/>
    </location>
</feature>
<organism>
    <name type="scientific">Lelliottia amnigena</name>
    <name type="common">Enterobacter amnigenus</name>
    <dbReference type="NCBI Taxonomy" id="61646"/>
    <lineage>
        <taxon>Bacteria</taxon>
        <taxon>Pseudomonadati</taxon>
        <taxon>Pseudomonadota</taxon>
        <taxon>Gammaproteobacteria</taxon>
        <taxon>Enterobacterales</taxon>
        <taxon>Enterobacteriaceae</taxon>
        <taxon>Lelliottia</taxon>
    </lineage>
</organism>
<keyword id="KW-0997">Cell inner membrane</keyword>
<keyword id="KW-1003">Cell membrane</keyword>
<keyword id="KW-1015">Disulfide bond</keyword>
<keyword id="KW-0249">Electron transport</keyword>
<keyword id="KW-0472">Membrane</keyword>
<keyword id="KW-0560">Oxidoreductase</keyword>
<keyword id="KW-0676">Redox-active center</keyword>
<keyword id="KW-0812">Transmembrane</keyword>
<keyword id="KW-1133">Transmembrane helix</keyword>
<keyword id="KW-0813">Transport</keyword>
<proteinExistence type="inferred from homology"/>
<reference key="1">
    <citation type="journal article" date="1999" name="Protein Expr. Purif.">
        <title>Molecular cloning of the arylsulfate sulfotransferase gene and characterization of its product from Enterobacter amnigenus AR-37.</title>
        <authorList>
            <person name="Kwon A.-R."/>
            <person name="Oh T.-G."/>
            <person name="Kim D.-H."/>
            <person name="Choi E.-C."/>
        </authorList>
    </citation>
    <scope>NUCLEOTIDE SEQUENCE [GENOMIC DNA]</scope>
    <source>
        <strain>AR-37</strain>
    </source>
</reference>
<comment type="function">
    <text evidence="1">Required for disulfide bond formation in some proteins. Part of a redox system composed of DsbI and DsbL that mediates formation of an essential disulfide bond in AssT.</text>
</comment>
<comment type="subunit">
    <text evidence="1">Interacts with DsbL.</text>
</comment>
<comment type="subcellular location">
    <subcellularLocation>
        <location evidence="1">Cell inner membrane</location>
        <topology evidence="1">Multi-pass membrane protein</topology>
    </subcellularLocation>
</comment>
<comment type="similarity">
    <text evidence="1">Belongs to the DsbB family. DsbI subfamily.</text>
</comment>
<comment type="caution">
    <text evidence="2">Has been given the gene name dsbB; however this is a longer form which is more closely related to the DsbI subfamily.</text>
</comment>
<gene>
    <name evidence="1" type="primary">dsbI</name>
</gene>
<dbReference type="EMBL" id="AF012826">
    <property type="protein sequence ID" value="AAD41462.1"/>
    <property type="molecule type" value="Genomic_DNA"/>
</dbReference>
<dbReference type="BRENDA" id="1.8.4.2">
    <property type="organism ID" value="2085"/>
</dbReference>
<dbReference type="GO" id="GO:0005886">
    <property type="term" value="C:plasma membrane"/>
    <property type="evidence" value="ECO:0007669"/>
    <property type="project" value="UniProtKB-SubCell"/>
</dbReference>
<dbReference type="GO" id="GO:0015035">
    <property type="term" value="F:protein-disulfide reductase activity"/>
    <property type="evidence" value="ECO:0007669"/>
    <property type="project" value="UniProtKB-UniRule"/>
</dbReference>
<dbReference type="GO" id="GO:0006457">
    <property type="term" value="P:protein folding"/>
    <property type="evidence" value="ECO:0007669"/>
    <property type="project" value="InterPro"/>
</dbReference>
<dbReference type="Gene3D" id="1.20.1550.10">
    <property type="entry name" value="DsbB-like"/>
    <property type="match status" value="1"/>
</dbReference>
<dbReference type="HAMAP" id="MF_01311">
    <property type="entry name" value="DsbI"/>
    <property type="match status" value="1"/>
</dbReference>
<dbReference type="InterPro" id="IPR003752">
    <property type="entry name" value="DiS_bond_form_DsbB/BdbC"/>
</dbReference>
<dbReference type="InterPro" id="IPR023792">
    <property type="entry name" value="DiS_OxRdtase_Dsbl"/>
</dbReference>
<dbReference type="InterPro" id="IPR050183">
    <property type="entry name" value="DsbB"/>
</dbReference>
<dbReference type="InterPro" id="IPR023380">
    <property type="entry name" value="DsbB-like_sf"/>
</dbReference>
<dbReference type="NCBIfam" id="NF003304">
    <property type="entry name" value="PRK04307.1"/>
    <property type="match status" value="1"/>
</dbReference>
<dbReference type="PANTHER" id="PTHR36570">
    <property type="entry name" value="DISULFIDE BOND FORMATION PROTEIN B"/>
    <property type="match status" value="1"/>
</dbReference>
<dbReference type="PANTHER" id="PTHR36570:SF1">
    <property type="entry name" value="PROTEIN-DISULFIDE OXIDOREDUCTASE DSBI"/>
    <property type="match status" value="1"/>
</dbReference>
<dbReference type="Pfam" id="PF02600">
    <property type="entry name" value="DsbB"/>
    <property type="match status" value="1"/>
</dbReference>
<dbReference type="SUPFAM" id="SSF158442">
    <property type="entry name" value="DsbB-like"/>
    <property type="match status" value="1"/>
</dbReference>
<sequence>MVDIKGMWKDLRATPVETLVRWQEQRFLWLLMAVAMGGLIILAHSFFQIYLYMAPCEQCVYIRFAMFVMVFGGLIAAINPKNIILKLIGCLAAFYGSIMGIKFSVKLNGIHYAVHNPDPDALFGVQGCSTDPTFPFGLPLAEWAPEWFRPTGDCGYDAPVVLTRNAQFCPAVVCGNVSALRRLVSDPALAFYEYGAGVPAGVWAMFCTVADYERRLGNQAD</sequence>
<evidence type="ECO:0000255" key="1">
    <source>
        <dbReference type="HAMAP-Rule" id="MF_01311"/>
    </source>
</evidence>
<evidence type="ECO:0000305" key="2"/>